<protein>
    <recommendedName>
        <fullName evidence="1">L-fucose isomerase</fullName>
        <ecNumber evidence="1">5.3.1.25</ecNumber>
    </recommendedName>
    <alternativeName>
        <fullName evidence="1">6-deoxy-L-galactose isomerase</fullName>
    </alternativeName>
    <alternativeName>
        <fullName>FucIase</fullName>
    </alternativeName>
</protein>
<feature type="chain" id="PRO_0000204142" description="L-fucose isomerase">
    <location>
        <begin position="1"/>
        <end position="590"/>
    </location>
</feature>
<feature type="active site" description="Proton acceptor" evidence="1">
    <location>
        <position position="337"/>
    </location>
</feature>
<feature type="active site" description="Proton acceptor" evidence="1">
    <location>
        <position position="361"/>
    </location>
</feature>
<feature type="binding site" evidence="1">
    <location>
        <position position="337"/>
    </location>
    <ligand>
        <name>Mn(2+)</name>
        <dbReference type="ChEBI" id="CHEBI:29035"/>
    </ligand>
</feature>
<feature type="binding site" evidence="1">
    <location>
        <position position="361"/>
    </location>
    <ligand>
        <name>Mn(2+)</name>
        <dbReference type="ChEBI" id="CHEBI:29035"/>
    </ligand>
</feature>
<feature type="binding site" evidence="1">
    <location>
        <position position="528"/>
    </location>
    <ligand>
        <name>Mn(2+)</name>
        <dbReference type="ChEBI" id="CHEBI:29035"/>
    </ligand>
</feature>
<sequence length="590" mass="65341">MKKYPKIGIRPTIDGRQGGVRESLEEKTMNLAKAVAELITSNLKNGDGTPVECVIADGTIGRVAESAACAEKFEREGVGATITVTSCWCYGAETMDMNPYYPKAVWGFNGTERPGAVYLAAVLAGHAQKGLPAFGIYGRDVQDLNDNSIPADVAEKILRFARAAQAVATMRGKSYLSMGSVSMGIAGSIVNPDFFQEYLGMRNESIDLTEIIRRMAEGIYDKEEYAKAMAWTEKYCKKNEGNDFNIPEKTKTRAQKDEDWEFIVKMTIIMRDLMQGNPKLKELGFKEEALGHNAIAAGFQGQRQWTDFYPNGDFSEALLNTSFDWNGIREAFVVATENDACNGVAMLFGHLLTNRAQIFSDVRTYWSPEAVKRVTGKELTGMAANGIIHLINSGATTLDGTGQQTNANGEPAMKPCWEITEGEVEKCLEATTWYPANRDYFRGGGFSSNFLSKGGMPVTMMRLNLIKGLGPVLQIAEGWTVEIDPEIHKLLDERTDRTWPTTWFVPRLCDKPAFKDVYSVMNNWGANHGAISYGHIGQDVITLASMLRIPVCMHNVEEDQIFRPAAWNAFGMDKEGADYRACTTYGPIYK</sequence>
<dbReference type="EC" id="5.3.1.25" evidence="1"/>
<dbReference type="EMBL" id="AP006841">
    <property type="protein sequence ID" value="BAD47002.1"/>
    <property type="molecule type" value="Genomic_DNA"/>
</dbReference>
<dbReference type="RefSeq" id="WP_005779363.1">
    <property type="nucleotide sequence ID" value="NC_006347.1"/>
</dbReference>
<dbReference type="RefSeq" id="YP_097536.1">
    <property type="nucleotide sequence ID" value="NC_006347.1"/>
</dbReference>
<dbReference type="SMR" id="Q64ZS4"/>
<dbReference type="STRING" id="295405.BF0253"/>
<dbReference type="KEGG" id="bfr:BF0253"/>
<dbReference type="PATRIC" id="fig|295405.11.peg.283"/>
<dbReference type="HOGENOM" id="CLU_033326_1_0_10"/>
<dbReference type="OrthoDB" id="9760430at2"/>
<dbReference type="UniPathway" id="UPA00563">
    <property type="reaction ID" value="UER00624"/>
</dbReference>
<dbReference type="Proteomes" id="UP000002197">
    <property type="component" value="Chromosome"/>
</dbReference>
<dbReference type="GO" id="GO:0005737">
    <property type="term" value="C:cytoplasm"/>
    <property type="evidence" value="ECO:0007669"/>
    <property type="project" value="UniProtKB-SubCell"/>
</dbReference>
<dbReference type="GO" id="GO:0008790">
    <property type="term" value="F:arabinose isomerase activity"/>
    <property type="evidence" value="ECO:0007669"/>
    <property type="project" value="TreeGrafter"/>
</dbReference>
<dbReference type="GO" id="GO:0008736">
    <property type="term" value="F:L-fucose isomerase activity"/>
    <property type="evidence" value="ECO:0007669"/>
    <property type="project" value="UniProtKB-UniRule"/>
</dbReference>
<dbReference type="GO" id="GO:0030145">
    <property type="term" value="F:manganese ion binding"/>
    <property type="evidence" value="ECO:0007669"/>
    <property type="project" value="UniProtKB-UniRule"/>
</dbReference>
<dbReference type="GO" id="GO:0019571">
    <property type="term" value="P:D-arabinose catabolic process"/>
    <property type="evidence" value="ECO:0007669"/>
    <property type="project" value="TreeGrafter"/>
</dbReference>
<dbReference type="GO" id="GO:0042355">
    <property type="term" value="P:L-fucose catabolic process"/>
    <property type="evidence" value="ECO:0007669"/>
    <property type="project" value="UniProtKB-UniRule"/>
</dbReference>
<dbReference type="CDD" id="cd03556">
    <property type="entry name" value="L-fucose_isomerase"/>
    <property type="match status" value="1"/>
</dbReference>
<dbReference type="FunFam" id="3.20.14.10:FF:000001">
    <property type="entry name" value="L-fucose isomerase"/>
    <property type="match status" value="1"/>
</dbReference>
<dbReference type="FunFam" id="3.40.275.10:FF:000001">
    <property type="entry name" value="L-fucose isomerase"/>
    <property type="match status" value="1"/>
</dbReference>
<dbReference type="FunFam" id="3.40.50.1070:FF:000001">
    <property type="entry name" value="L-fucose isomerase"/>
    <property type="match status" value="1"/>
</dbReference>
<dbReference type="Gene3D" id="3.40.50.1070">
    <property type="match status" value="1"/>
</dbReference>
<dbReference type="Gene3D" id="3.40.275.10">
    <property type="entry name" value="L-fucose Isomerase, Chain A, domain 2"/>
    <property type="match status" value="1"/>
</dbReference>
<dbReference type="Gene3D" id="3.20.14.10">
    <property type="entry name" value="L-fucose/L-arabinose isomerase, C-terminal"/>
    <property type="match status" value="1"/>
</dbReference>
<dbReference type="HAMAP" id="MF_01254">
    <property type="entry name" value="Fucose_iso"/>
    <property type="match status" value="1"/>
</dbReference>
<dbReference type="InterPro" id="IPR004216">
    <property type="entry name" value="Fuc/Ara_isomerase_C"/>
</dbReference>
<dbReference type="InterPro" id="IPR038393">
    <property type="entry name" value="Fuc_iso_dom3_sf"/>
</dbReference>
<dbReference type="InterPro" id="IPR015888">
    <property type="entry name" value="Fuc_isomerase_C"/>
</dbReference>
<dbReference type="InterPro" id="IPR038391">
    <property type="entry name" value="Fucose_iso_dom1_sf"/>
</dbReference>
<dbReference type="InterPro" id="IPR012888">
    <property type="entry name" value="Fucose_iso_N1"/>
</dbReference>
<dbReference type="InterPro" id="IPR005763">
    <property type="entry name" value="Fucose_isomerase"/>
</dbReference>
<dbReference type="InterPro" id="IPR038392">
    <property type="entry name" value="Fucose_isomerase_dom2_sf"/>
</dbReference>
<dbReference type="InterPro" id="IPR009015">
    <property type="entry name" value="Fucose_isomerase_N/cen_sf"/>
</dbReference>
<dbReference type="InterPro" id="IPR012889">
    <property type="entry name" value="Fucose_isomerase_N2"/>
</dbReference>
<dbReference type="NCBIfam" id="TIGR01089">
    <property type="entry name" value="fucI"/>
    <property type="match status" value="1"/>
</dbReference>
<dbReference type="NCBIfam" id="NF008220">
    <property type="entry name" value="PRK10991.1"/>
    <property type="match status" value="1"/>
</dbReference>
<dbReference type="PANTHER" id="PTHR37840">
    <property type="entry name" value="L-FUCOSE ISOMERASE"/>
    <property type="match status" value="1"/>
</dbReference>
<dbReference type="PANTHER" id="PTHR37840:SF1">
    <property type="entry name" value="L-FUCOSE ISOMERASE"/>
    <property type="match status" value="1"/>
</dbReference>
<dbReference type="Pfam" id="PF02952">
    <property type="entry name" value="Fucose_iso_C"/>
    <property type="match status" value="1"/>
</dbReference>
<dbReference type="Pfam" id="PF07881">
    <property type="entry name" value="Fucose_iso_N1"/>
    <property type="match status" value="1"/>
</dbReference>
<dbReference type="Pfam" id="PF07882">
    <property type="entry name" value="Fucose_iso_N2"/>
    <property type="match status" value="1"/>
</dbReference>
<dbReference type="SUPFAM" id="SSF50443">
    <property type="entry name" value="FucI/AraA C-terminal domain-like"/>
    <property type="match status" value="1"/>
</dbReference>
<dbReference type="SUPFAM" id="SSF53743">
    <property type="entry name" value="FucI/AraA N-terminal and middle domains"/>
    <property type="match status" value="1"/>
</dbReference>
<name>FUCI_BACFR</name>
<reference key="1">
    <citation type="journal article" date="2004" name="Proc. Natl. Acad. Sci. U.S.A.">
        <title>Genomic analysis of Bacteroides fragilis reveals extensive DNA inversions regulating cell surface adaptation.</title>
        <authorList>
            <person name="Kuwahara T."/>
            <person name="Yamashita A."/>
            <person name="Hirakawa H."/>
            <person name="Nakayama H."/>
            <person name="Toh H."/>
            <person name="Okada N."/>
            <person name="Kuhara S."/>
            <person name="Hattori M."/>
            <person name="Hayashi T."/>
            <person name="Ohnishi Y."/>
        </authorList>
    </citation>
    <scope>NUCLEOTIDE SEQUENCE [LARGE SCALE GENOMIC DNA]</scope>
    <source>
        <strain>YCH46</strain>
    </source>
</reference>
<evidence type="ECO:0000255" key="1">
    <source>
        <dbReference type="HAMAP-Rule" id="MF_01254"/>
    </source>
</evidence>
<comment type="function">
    <text evidence="1">Converts the aldose L-fucose into the corresponding ketose L-fuculose.</text>
</comment>
<comment type="catalytic activity">
    <reaction evidence="1">
        <text>L-fucose = L-fuculose</text>
        <dbReference type="Rhea" id="RHEA:17233"/>
        <dbReference type="ChEBI" id="CHEBI:2181"/>
        <dbReference type="ChEBI" id="CHEBI:17617"/>
        <dbReference type="EC" id="5.3.1.25"/>
    </reaction>
</comment>
<comment type="cofactor">
    <cofactor evidence="1">
        <name>Mn(2+)</name>
        <dbReference type="ChEBI" id="CHEBI:29035"/>
    </cofactor>
</comment>
<comment type="pathway">
    <text evidence="1">Carbohydrate degradation; L-fucose degradation; L-lactaldehyde and glycerone phosphate from L-fucose: step 1/3.</text>
</comment>
<comment type="subcellular location">
    <subcellularLocation>
        <location evidence="1">Cytoplasm</location>
    </subcellularLocation>
</comment>
<comment type="similarity">
    <text evidence="1">Belongs to the L-fucose isomerase family.</text>
</comment>
<keyword id="KW-0119">Carbohydrate metabolism</keyword>
<keyword id="KW-0963">Cytoplasm</keyword>
<keyword id="KW-0294">Fucose metabolism</keyword>
<keyword id="KW-0413">Isomerase</keyword>
<keyword id="KW-0464">Manganese</keyword>
<keyword id="KW-0479">Metal-binding</keyword>
<gene>
    <name evidence="1" type="primary">fucI</name>
    <name type="ordered locus">BF0253</name>
</gene>
<proteinExistence type="inferred from homology"/>
<accession>Q64ZS4</accession>
<organism>
    <name type="scientific">Bacteroides fragilis (strain YCH46)</name>
    <dbReference type="NCBI Taxonomy" id="295405"/>
    <lineage>
        <taxon>Bacteria</taxon>
        <taxon>Pseudomonadati</taxon>
        <taxon>Bacteroidota</taxon>
        <taxon>Bacteroidia</taxon>
        <taxon>Bacteroidales</taxon>
        <taxon>Bacteroidaceae</taxon>
        <taxon>Bacteroides</taxon>
    </lineage>
</organism>